<sequence>MKKVVKYLISLILAIIIVLFVQTFVIVGHVIPNNDMSPTLNKGDRVIVNKIKVTFNQLNNGDIITYRRGNEIYTSRIIAKPGQSMAFRQGQLYRDDRPVDASYAKNRKIKDFSLRNFKELDGDIIPPNNFVVLNDHDNNQHDSRQFGLIDKKDIIGNISLRYYPFSKWTIQFKS</sequence>
<proteinExistence type="inferred from homology"/>
<protein>
    <recommendedName>
        <fullName>Inactive signal peptidase IA</fullName>
    </recommendedName>
</protein>
<comment type="function">
    <text>Catalytically inactive.</text>
</comment>
<comment type="subcellular location">
    <subcellularLocation>
        <location evidence="2">Cell membrane</location>
        <topology evidence="2">Single-pass type II membrane protein</topology>
    </subcellularLocation>
</comment>
<comment type="similarity">
    <text evidence="2">Belongs to the peptidase S26 family.</text>
</comment>
<feature type="chain" id="PRO_0000109525" description="Inactive signal peptidase IA">
    <location>
        <begin position="1"/>
        <end position="174"/>
    </location>
</feature>
<feature type="topological domain" description="Cytoplasmic" evidence="1">
    <location>
        <begin position="1"/>
        <end position="7"/>
    </location>
</feature>
<feature type="transmembrane region" description="Helical" evidence="1">
    <location>
        <begin position="8"/>
        <end position="28"/>
    </location>
</feature>
<feature type="topological domain" description="Extracellular" evidence="1">
    <location>
        <begin position="29"/>
        <end position="174"/>
    </location>
</feature>
<dbReference type="EMBL" id="U65000">
    <property type="protein sequence ID" value="AAC44434.1"/>
    <property type="molecule type" value="Genomic_DNA"/>
</dbReference>
<dbReference type="SMR" id="P0A066"/>
<dbReference type="OMA" id="KNIEPKY"/>
<dbReference type="GO" id="GO:0005886">
    <property type="term" value="C:plasma membrane"/>
    <property type="evidence" value="ECO:0007669"/>
    <property type="project" value="UniProtKB-SubCell"/>
</dbReference>
<dbReference type="GO" id="GO:0004252">
    <property type="term" value="F:serine-type endopeptidase activity"/>
    <property type="evidence" value="ECO:0007669"/>
    <property type="project" value="InterPro"/>
</dbReference>
<dbReference type="GO" id="GO:0006465">
    <property type="term" value="P:signal peptide processing"/>
    <property type="evidence" value="ECO:0007669"/>
    <property type="project" value="InterPro"/>
</dbReference>
<dbReference type="CDD" id="cd06530">
    <property type="entry name" value="S26_SPase_I"/>
    <property type="match status" value="1"/>
</dbReference>
<dbReference type="Gene3D" id="2.10.109.10">
    <property type="entry name" value="Umud Fragment, subunit A"/>
    <property type="match status" value="1"/>
</dbReference>
<dbReference type="InterPro" id="IPR036286">
    <property type="entry name" value="LexA/Signal_pep-like_sf"/>
</dbReference>
<dbReference type="InterPro" id="IPR000223">
    <property type="entry name" value="Pept_S26A_signal_pept_1"/>
</dbReference>
<dbReference type="InterPro" id="IPR019533">
    <property type="entry name" value="Peptidase_S26"/>
</dbReference>
<dbReference type="NCBIfam" id="TIGR02227">
    <property type="entry name" value="sigpep_I_bact"/>
    <property type="match status" value="1"/>
</dbReference>
<dbReference type="PANTHER" id="PTHR43390:SF1">
    <property type="entry name" value="CHLOROPLAST PROCESSING PEPTIDASE"/>
    <property type="match status" value="1"/>
</dbReference>
<dbReference type="PANTHER" id="PTHR43390">
    <property type="entry name" value="SIGNAL PEPTIDASE I"/>
    <property type="match status" value="1"/>
</dbReference>
<dbReference type="Pfam" id="PF10502">
    <property type="entry name" value="Peptidase_S26"/>
    <property type="match status" value="1"/>
</dbReference>
<dbReference type="PRINTS" id="PR00727">
    <property type="entry name" value="LEADERPTASE"/>
</dbReference>
<dbReference type="SUPFAM" id="SSF51306">
    <property type="entry name" value="LexA/Signal peptidase"/>
    <property type="match status" value="1"/>
</dbReference>
<reference key="1">
    <citation type="journal article" date="1996" name="J. Bacteriol.">
        <title>Molecular cloning and expression of the spsB gene encoding an essential type I signal peptidase from Staphylococcus aureus.</title>
        <authorList>
            <person name="Cregg K.M."/>
            <person name="Wilding E.I."/>
            <person name="Black M.T."/>
        </authorList>
    </citation>
    <scope>NUCLEOTIDE SEQUENCE [GENOMIC DNA]</scope>
    <source>
        <strain>WCUH29 / NCIMB 40771</strain>
    </source>
</reference>
<name>LEPH_STAAU</name>
<gene>
    <name type="primary">spsA</name>
</gene>
<accession>P0A066</accession>
<accession>P72364</accession>
<evidence type="ECO:0000255" key="1"/>
<evidence type="ECO:0000305" key="2"/>
<organism>
    <name type="scientific">Staphylococcus aureus</name>
    <dbReference type="NCBI Taxonomy" id="1280"/>
    <lineage>
        <taxon>Bacteria</taxon>
        <taxon>Bacillati</taxon>
        <taxon>Bacillota</taxon>
        <taxon>Bacilli</taxon>
        <taxon>Bacillales</taxon>
        <taxon>Staphylococcaceae</taxon>
        <taxon>Staphylococcus</taxon>
    </lineage>
</organism>
<keyword id="KW-1003">Cell membrane</keyword>
<keyword id="KW-0472">Membrane</keyword>
<keyword id="KW-0812">Transmembrane</keyword>
<keyword id="KW-1133">Transmembrane helix</keyword>